<proteinExistence type="inferred from homology"/>
<comment type="function">
    <text evidence="1">Reversible hydration of carbon dioxide.</text>
</comment>
<comment type="catalytic activity">
    <reaction evidence="5">
        <text>hydrogencarbonate + H(+) = CO2 + H2O</text>
        <dbReference type="Rhea" id="RHEA:10748"/>
        <dbReference type="ChEBI" id="CHEBI:15377"/>
        <dbReference type="ChEBI" id="CHEBI:15378"/>
        <dbReference type="ChEBI" id="CHEBI:16526"/>
        <dbReference type="ChEBI" id="CHEBI:17544"/>
        <dbReference type="EC" id="4.2.1.1"/>
    </reaction>
</comment>
<comment type="cofactor">
    <cofactor evidence="3">
        <name>Zn(2+)</name>
        <dbReference type="ChEBI" id="CHEBI:29105"/>
    </cofactor>
    <text evidence="3">Binds 1 zinc ion per subunit.</text>
</comment>
<comment type="subunit">
    <text evidence="2">Oligomer.</text>
</comment>
<comment type="similarity">
    <text evidence="4">Belongs to the beta-class carbonic anhydrase family.</text>
</comment>
<gene>
    <name type="primary">bca-1</name>
    <name type="ORF">T13C5.5</name>
</gene>
<keyword id="KW-0456">Lyase</keyword>
<keyword id="KW-0479">Metal-binding</keyword>
<keyword id="KW-1185">Reference proteome</keyword>
<keyword id="KW-0862">Zinc</keyword>
<evidence type="ECO:0000250" key="1"/>
<evidence type="ECO:0000250" key="2">
    <source>
        <dbReference type="UniProtKB" id="P0ABE9"/>
    </source>
</evidence>
<evidence type="ECO:0000250" key="3">
    <source>
        <dbReference type="UniProtKB" id="P45148"/>
    </source>
</evidence>
<evidence type="ECO:0000255" key="4"/>
<evidence type="ECO:0000305" key="5"/>
<dbReference type="EC" id="4.2.1.1"/>
<dbReference type="EMBL" id="FO080546">
    <property type="protein sequence ID" value="CCD64556.1"/>
    <property type="molecule type" value="Genomic_DNA"/>
</dbReference>
<dbReference type="PIR" id="T16868">
    <property type="entry name" value="T16868"/>
</dbReference>
<dbReference type="RefSeq" id="NP_741809.1">
    <property type="nucleotide sequence ID" value="NM_171701.7"/>
</dbReference>
<dbReference type="SMR" id="Q22460"/>
<dbReference type="BioGRID" id="45822">
    <property type="interactions" value="2"/>
</dbReference>
<dbReference type="FunCoup" id="Q22460">
    <property type="interactions" value="400"/>
</dbReference>
<dbReference type="STRING" id="6239.T13C5.5.1"/>
<dbReference type="PaxDb" id="6239-T13C5.5"/>
<dbReference type="PeptideAtlas" id="Q22460"/>
<dbReference type="EnsemblMetazoa" id="T13C5.5.1">
    <property type="protein sequence ID" value="T13C5.5.1"/>
    <property type="gene ID" value="WBGene00000245"/>
</dbReference>
<dbReference type="GeneID" id="180890"/>
<dbReference type="KEGG" id="cel:CELE_T13C5.5"/>
<dbReference type="AGR" id="WB:WBGene00000245"/>
<dbReference type="CTD" id="180890"/>
<dbReference type="WormBase" id="T13C5.5">
    <property type="protein sequence ID" value="CE04946"/>
    <property type="gene ID" value="WBGene00000245"/>
    <property type="gene designation" value="bca-1"/>
</dbReference>
<dbReference type="eggNOG" id="KOG1578">
    <property type="taxonomic scope" value="Eukaryota"/>
</dbReference>
<dbReference type="GeneTree" id="ENSGT00500000045239"/>
<dbReference type="HOGENOM" id="CLU_053879_5_3_1"/>
<dbReference type="InParanoid" id="Q22460"/>
<dbReference type="OMA" id="PEDQDGP"/>
<dbReference type="OrthoDB" id="10020193at2759"/>
<dbReference type="PhylomeDB" id="Q22460"/>
<dbReference type="PRO" id="PR:Q22460"/>
<dbReference type="Proteomes" id="UP000001940">
    <property type="component" value="Chromosome X"/>
</dbReference>
<dbReference type="Bgee" id="WBGene00000245">
    <property type="expression patterns" value="Expressed in larva and 3 other cell types or tissues"/>
</dbReference>
<dbReference type="GO" id="GO:0004089">
    <property type="term" value="F:carbonate dehydratase activity"/>
    <property type="evidence" value="ECO:0007669"/>
    <property type="project" value="UniProtKB-EC"/>
</dbReference>
<dbReference type="GO" id="GO:0008270">
    <property type="term" value="F:zinc ion binding"/>
    <property type="evidence" value="ECO:0007669"/>
    <property type="project" value="InterPro"/>
</dbReference>
<dbReference type="GO" id="GO:0036498">
    <property type="term" value="P:IRE1-mediated unfolded protein response"/>
    <property type="evidence" value="ECO:0007007"/>
    <property type="project" value="WormBase"/>
</dbReference>
<dbReference type="CDD" id="cd00884">
    <property type="entry name" value="beta_CA_cladeB"/>
    <property type="match status" value="1"/>
</dbReference>
<dbReference type="FunFam" id="3.40.1050.10:FF:000007">
    <property type="entry name" value="Carbonic anhydrase"/>
    <property type="match status" value="1"/>
</dbReference>
<dbReference type="Gene3D" id="3.40.1050.10">
    <property type="entry name" value="Carbonic anhydrase"/>
    <property type="match status" value="1"/>
</dbReference>
<dbReference type="InterPro" id="IPR045066">
    <property type="entry name" value="Beta_CA_cladeB"/>
</dbReference>
<dbReference type="InterPro" id="IPR001765">
    <property type="entry name" value="Carbonic_anhydrase"/>
</dbReference>
<dbReference type="InterPro" id="IPR036874">
    <property type="entry name" value="Carbonic_anhydrase_sf"/>
</dbReference>
<dbReference type="PANTHER" id="PTHR11002">
    <property type="entry name" value="CARBONIC ANHYDRASE"/>
    <property type="match status" value="1"/>
</dbReference>
<dbReference type="PANTHER" id="PTHR11002:SF76">
    <property type="entry name" value="CARBONIC ANHYDRASE"/>
    <property type="match status" value="1"/>
</dbReference>
<dbReference type="Pfam" id="PF00484">
    <property type="entry name" value="Pro_CA"/>
    <property type="match status" value="1"/>
</dbReference>
<dbReference type="SMART" id="SM00947">
    <property type="entry name" value="Pro_CA"/>
    <property type="match status" value="1"/>
</dbReference>
<dbReference type="SUPFAM" id="SSF53056">
    <property type="entry name" value="beta-carbonic anhydrase, cab"/>
    <property type="match status" value="1"/>
</dbReference>
<organism>
    <name type="scientific">Caenorhabditis elegans</name>
    <dbReference type="NCBI Taxonomy" id="6239"/>
    <lineage>
        <taxon>Eukaryota</taxon>
        <taxon>Metazoa</taxon>
        <taxon>Ecdysozoa</taxon>
        <taxon>Nematoda</taxon>
        <taxon>Chromadorea</taxon>
        <taxon>Rhabditida</taxon>
        <taxon>Rhabditina</taxon>
        <taxon>Rhabditomorpha</taxon>
        <taxon>Rhabditoidea</taxon>
        <taxon>Rhabditidae</taxon>
        <taxon>Peloderinae</taxon>
        <taxon>Caenorhabditis</taxon>
    </lineage>
</organism>
<sequence length="270" mass="30686">MNKILRGVIQFRNTIRKDLVKQFEEIKNNPSPTAVMFTCMDSRMLPTRFTQSQVGDMFVVRNAGNMIPDAPNYGAFSEVSVNTEPAALELAVKRGGIRHIVVCGHSDCKAINTLYGLHQCPKNFDVTSPMDHWVRRNGFASVKRLNERLHRGPSSMKFESEVAPSQSFDAIIDPMDTLAMEDKLSQINVLQQLINICSHEFLKEYLESGRLHIHGMWFDIYKGEDYLFSKDKKRFVVIDEKTVTDLLAELNARYPVPEDQDGPVAFAKSN</sequence>
<name>BCA1_CAEEL</name>
<feature type="chain" id="PRO_0000374066" description="Beta carbonic anhydrase 1">
    <location>
        <begin position="1"/>
        <end position="270"/>
    </location>
</feature>
<feature type="binding site" evidence="3">
    <location>
        <position position="39"/>
    </location>
    <ligand>
        <name>Zn(2+)</name>
        <dbReference type="ChEBI" id="CHEBI:29105"/>
    </ligand>
</feature>
<feature type="binding site" evidence="3">
    <location>
        <position position="41"/>
    </location>
    <ligand>
        <name>Zn(2+)</name>
        <dbReference type="ChEBI" id="CHEBI:29105"/>
    </ligand>
</feature>
<feature type="binding site" evidence="3">
    <location>
        <position position="105"/>
    </location>
    <ligand>
        <name>Zn(2+)</name>
        <dbReference type="ChEBI" id="CHEBI:29105"/>
    </ligand>
</feature>
<feature type="binding site" evidence="3">
    <location>
        <position position="108"/>
    </location>
    <ligand>
        <name>Zn(2+)</name>
        <dbReference type="ChEBI" id="CHEBI:29105"/>
    </ligand>
</feature>
<reference key="1">
    <citation type="journal article" date="1998" name="Science">
        <title>Genome sequence of the nematode C. elegans: a platform for investigating biology.</title>
        <authorList>
            <consortium name="The C. elegans sequencing consortium"/>
        </authorList>
    </citation>
    <scope>NUCLEOTIDE SEQUENCE [LARGE SCALE GENOMIC DNA]</scope>
    <source>
        <strain>Bristol N2</strain>
    </source>
</reference>
<accession>Q22460</accession>
<protein>
    <recommendedName>
        <fullName>Beta carbonic anhydrase 1</fullName>
        <ecNumber>4.2.1.1</ecNumber>
    </recommendedName>
</protein>